<reference key="1">
    <citation type="journal article" date="2005" name="J. Mammal.">
        <title>Phylogenetics of the new world rodent family Heteromyidae.</title>
        <authorList>
            <person name="Alexander L.F."/>
            <person name="Riddle B.R."/>
        </authorList>
    </citation>
    <scope>NUCLEOTIDE SEQUENCE [GENOMIC DNA]</scope>
    <source>
        <strain>Isolate LVT 2048</strain>
    </source>
</reference>
<sequence length="379" mass="42867">MTIMRKTHPLMKMVNHAFIDLPTPANISGWWNFGSLLGLCLIIQIASGLFLAMHYTPDTLTAFSSVTHICRDVNYGWLIRYMHANGASLFFICLYLHIGRGIYYGSYYYMETWNIGIILLFLTMATAFMGYVLPWGQMSFWGATVITNLLSAIPYIGTDLVEWIWGGFSVDKATLNRFXAFHFXLPFXIAAMAMVHLLFLHETGSNNPLGIPSDCDKIPFHPYXTTKDFLGIVLLLAFFFTLVLFFPDLLGDPDNYSPANPLNTPPHIKPEWYFLFAYAILRSIPNKLGGVIALVMSILILALLPHIQTAKQRSLMFRPISQLLFWLLVSDVLILTWIGGQPVEPPXIIIGQIASFLYFAIILVLMPIAGIIENKMLKW</sequence>
<accession>Q508M8</accession>
<geneLocation type="mitochondrion"/>
<name>CYB_DIPGR</name>
<gene>
    <name type="primary">MT-CYB</name>
    <name type="synonym">COB</name>
    <name type="synonym">CYTB</name>
    <name type="synonym">MTCYB</name>
</gene>
<proteinExistence type="inferred from homology"/>
<keyword id="KW-0249">Electron transport</keyword>
<keyword id="KW-0349">Heme</keyword>
<keyword id="KW-0408">Iron</keyword>
<keyword id="KW-0472">Membrane</keyword>
<keyword id="KW-0479">Metal-binding</keyword>
<keyword id="KW-0496">Mitochondrion</keyword>
<keyword id="KW-0999">Mitochondrion inner membrane</keyword>
<keyword id="KW-0679">Respiratory chain</keyword>
<keyword id="KW-0812">Transmembrane</keyword>
<keyword id="KW-1133">Transmembrane helix</keyword>
<keyword id="KW-0813">Transport</keyword>
<keyword id="KW-0830">Ubiquinone</keyword>
<protein>
    <recommendedName>
        <fullName>Cytochrome b</fullName>
    </recommendedName>
    <alternativeName>
        <fullName>Complex III subunit 3</fullName>
    </alternativeName>
    <alternativeName>
        <fullName>Complex III subunit III</fullName>
    </alternativeName>
    <alternativeName>
        <fullName>Cytochrome b-c1 complex subunit 3</fullName>
    </alternativeName>
    <alternativeName>
        <fullName>Ubiquinol-cytochrome-c reductase complex cytochrome b subunit</fullName>
    </alternativeName>
</protein>
<feature type="chain" id="PRO_0000255039" description="Cytochrome b">
    <location>
        <begin position="1"/>
        <end position="379"/>
    </location>
</feature>
<feature type="transmembrane region" description="Helical" evidence="2">
    <location>
        <begin position="33"/>
        <end position="53"/>
    </location>
</feature>
<feature type="transmembrane region" description="Helical" evidence="2">
    <location>
        <begin position="77"/>
        <end position="98"/>
    </location>
</feature>
<feature type="transmembrane region" description="Helical" evidence="2">
    <location>
        <begin position="113"/>
        <end position="133"/>
    </location>
</feature>
<feature type="transmembrane region" description="Helical" evidence="2">
    <location>
        <begin position="178"/>
        <end position="198"/>
    </location>
</feature>
<feature type="transmembrane region" description="Helical" evidence="2">
    <location>
        <begin position="226"/>
        <end position="246"/>
    </location>
</feature>
<feature type="transmembrane region" description="Helical" evidence="2">
    <location>
        <begin position="288"/>
        <end position="308"/>
    </location>
</feature>
<feature type="transmembrane region" description="Helical" evidence="2">
    <location>
        <begin position="320"/>
        <end position="340"/>
    </location>
</feature>
<feature type="transmembrane region" description="Helical" evidence="2">
    <location>
        <begin position="347"/>
        <end position="367"/>
    </location>
</feature>
<feature type="binding site" description="axial binding residue" evidence="2">
    <location>
        <position position="83"/>
    </location>
    <ligand>
        <name>heme b</name>
        <dbReference type="ChEBI" id="CHEBI:60344"/>
        <label>b562</label>
    </ligand>
    <ligandPart>
        <name>Fe</name>
        <dbReference type="ChEBI" id="CHEBI:18248"/>
    </ligandPart>
</feature>
<feature type="binding site" description="axial binding residue" evidence="2">
    <location>
        <position position="97"/>
    </location>
    <ligand>
        <name>heme b</name>
        <dbReference type="ChEBI" id="CHEBI:60344"/>
        <label>b566</label>
    </ligand>
    <ligandPart>
        <name>Fe</name>
        <dbReference type="ChEBI" id="CHEBI:18248"/>
    </ligandPart>
</feature>
<feature type="binding site" description="axial binding residue" evidence="2">
    <location>
        <position position="182"/>
    </location>
    <ligand>
        <name>heme b</name>
        <dbReference type="ChEBI" id="CHEBI:60344"/>
        <label>b562</label>
    </ligand>
    <ligandPart>
        <name>Fe</name>
        <dbReference type="ChEBI" id="CHEBI:18248"/>
    </ligandPart>
</feature>
<feature type="binding site" description="axial binding residue" evidence="2">
    <location>
        <position position="196"/>
    </location>
    <ligand>
        <name>heme b</name>
        <dbReference type="ChEBI" id="CHEBI:60344"/>
        <label>b566</label>
    </ligand>
    <ligandPart>
        <name>Fe</name>
        <dbReference type="ChEBI" id="CHEBI:18248"/>
    </ligandPart>
</feature>
<feature type="binding site" evidence="2">
    <location>
        <position position="201"/>
    </location>
    <ligand>
        <name>a ubiquinone</name>
        <dbReference type="ChEBI" id="CHEBI:16389"/>
    </ligand>
</feature>
<organism>
    <name type="scientific">Dipodomys gravipes</name>
    <name type="common">San Quintin kangaroo rat</name>
    <dbReference type="NCBI Taxonomy" id="323377"/>
    <lineage>
        <taxon>Eukaryota</taxon>
        <taxon>Metazoa</taxon>
        <taxon>Chordata</taxon>
        <taxon>Craniata</taxon>
        <taxon>Vertebrata</taxon>
        <taxon>Euteleostomi</taxon>
        <taxon>Mammalia</taxon>
        <taxon>Eutheria</taxon>
        <taxon>Euarchontoglires</taxon>
        <taxon>Glires</taxon>
        <taxon>Rodentia</taxon>
        <taxon>Castorimorpha</taxon>
        <taxon>Heteromyidae</taxon>
        <taxon>Dipodomyinae</taxon>
        <taxon>Dipodomys</taxon>
    </lineage>
</organism>
<dbReference type="EMBL" id="AY926375">
    <property type="protein sequence ID" value="AAY23218.1"/>
    <property type="molecule type" value="Genomic_DNA"/>
</dbReference>
<dbReference type="GO" id="GO:0005743">
    <property type="term" value="C:mitochondrial inner membrane"/>
    <property type="evidence" value="ECO:0007669"/>
    <property type="project" value="UniProtKB-SubCell"/>
</dbReference>
<dbReference type="GO" id="GO:0045275">
    <property type="term" value="C:respiratory chain complex III"/>
    <property type="evidence" value="ECO:0007669"/>
    <property type="project" value="InterPro"/>
</dbReference>
<dbReference type="GO" id="GO:0046872">
    <property type="term" value="F:metal ion binding"/>
    <property type="evidence" value="ECO:0007669"/>
    <property type="project" value="UniProtKB-KW"/>
</dbReference>
<dbReference type="GO" id="GO:0008121">
    <property type="term" value="F:ubiquinol-cytochrome-c reductase activity"/>
    <property type="evidence" value="ECO:0007669"/>
    <property type="project" value="InterPro"/>
</dbReference>
<dbReference type="GO" id="GO:0006122">
    <property type="term" value="P:mitochondrial electron transport, ubiquinol to cytochrome c"/>
    <property type="evidence" value="ECO:0007669"/>
    <property type="project" value="TreeGrafter"/>
</dbReference>
<dbReference type="CDD" id="cd00290">
    <property type="entry name" value="cytochrome_b_C"/>
    <property type="match status" value="1"/>
</dbReference>
<dbReference type="CDD" id="cd00284">
    <property type="entry name" value="Cytochrome_b_N"/>
    <property type="match status" value="1"/>
</dbReference>
<dbReference type="FunFam" id="1.20.810.10:FF:000002">
    <property type="entry name" value="Cytochrome b"/>
    <property type="match status" value="1"/>
</dbReference>
<dbReference type="Gene3D" id="1.20.810.10">
    <property type="entry name" value="Cytochrome Bc1 Complex, Chain C"/>
    <property type="match status" value="1"/>
</dbReference>
<dbReference type="InterPro" id="IPR005798">
    <property type="entry name" value="Cyt_b/b6_C"/>
</dbReference>
<dbReference type="InterPro" id="IPR036150">
    <property type="entry name" value="Cyt_b/b6_C_sf"/>
</dbReference>
<dbReference type="InterPro" id="IPR005797">
    <property type="entry name" value="Cyt_b/b6_N"/>
</dbReference>
<dbReference type="InterPro" id="IPR027387">
    <property type="entry name" value="Cytb/b6-like_sf"/>
</dbReference>
<dbReference type="InterPro" id="IPR030689">
    <property type="entry name" value="Cytochrome_b"/>
</dbReference>
<dbReference type="InterPro" id="IPR048260">
    <property type="entry name" value="Cytochrome_b_C_euk/bac"/>
</dbReference>
<dbReference type="InterPro" id="IPR048259">
    <property type="entry name" value="Cytochrome_b_N_euk/bac"/>
</dbReference>
<dbReference type="InterPro" id="IPR016174">
    <property type="entry name" value="Di-haem_cyt_TM"/>
</dbReference>
<dbReference type="PANTHER" id="PTHR19271">
    <property type="entry name" value="CYTOCHROME B"/>
    <property type="match status" value="1"/>
</dbReference>
<dbReference type="PANTHER" id="PTHR19271:SF16">
    <property type="entry name" value="CYTOCHROME B"/>
    <property type="match status" value="1"/>
</dbReference>
<dbReference type="Pfam" id="PF00032">
    <property type="entry name" value="Cytochrom_B_C"/>
    <property type="match status" value="1"/>
</dbReference>
<dbReference type="Pfam" id="PF00033">
    <property type="entry name" value="Cytochrome_B"/>
    <property type="match status" value="1"/>
</dbReference>
<dbReference type="PIRSF" id="PIRSF038885">
    <property type="entry name" value="COB"/>
    <property type="match status" value="1"/>
</dbReference>
<dbReference type="SUPFAM" id="SSF81648">
    <property type="entry name" value="a domain/subunit of cytochrome bc1 complex (Ubiquinol-cytochrome c reductase)"/>
    <property type="match status" value="1"/>
</dbReference>
<dbReference type="SUPFAM" id="SSF81342">
    <property type="entry name" value="Transmembrane di-heme cytochromes"/>
    <property type="match status" value="1"/>
</dbReference>
<dbReference type="PROSITE" id="PS51003">
    <property type="entry name" value="CYTB_CTER"/>
    <property type="match status" value="1"/>
</dbReference>
<dbReference type="PROSITE" id="PS51002">
    <property type="entry name" value="CYTB_NTER"/>
    <property type="match status" value="1"/>
</dbReference>
<evidence type="ECO:0000250" key="1"/>
<evidence type="ECO:0000250" key="2">
    <source>
        <dbReference type="UniProtKB" id="P00157"/>
    </source>
</evidence>
<evidence type="ECO:0000255" key="3">
    <source>
        <dbReference type="PROSITE-ProRule" id="PRU00967"/>
    </source>
</evidence>
<evidence type="ECO:0000255" key="4">
    <source>
        <dbReference type="PROSITE-ProRule" id="PRU00968"/>
    </source>
</evidence>
<comment type="function">
    <text evidence="2">Component of the ubiquinol-cytochrome c reductase complex (complex III or cytochrome b-c1 complex) that is part of the mitochondrial respiratory chain. The b-c1 complex mediates electron transfer from ubiquinol to cytochrome c. Contributes to the generation of a proton gradient across the mitochondrial membrane that is then used for ATP synthesis.</text>
</comment>
<comment type="cofactor">
    <cofactor evidence="2">
        <name>heme b</name>
        <dbReference type="ChEBI" id="CHEBI:60344"/>
    </cofactor>
    <text evidence="2">Binds 2 heme b groups non-covalently.</text>
</comment>
<comment type="subunit">
    <text evidence="2">The cytochrome bc1 complex contains 11 subunits: 3 respiratory subunits (MT-CYB, CYC1 and UQCRFS1), 2 core proteins (UQCRC1 and UQCRC2) and 6 low-molecular weight proteins (UQCRH/QCR6, UQCRB/QCR7, UQCRQ/QCR8, UQCR10/QCR9, UQCR11/QCR10 and a cleavage product of UQCRFS1). This cytochrome bc1 complex then forms a dimer.</text>
</comment>
<comment type="subcellular location">
    <subcellularLocation>
        <location evidence="2">Mitochondrion inner membrane</location>
        <topology evidence="2">Multi-pass membrane protein</topology>
    </subcellularLocation>
</comment>
<comment type="miscellaneous">
    <text evidence="1">Heme 1 (or BL or b562) is low-potential and absorbs at about 562 nm, and heme 2 (or BH or b566) is high-potential and absorbs at about 566 nm.</text>
</comment>
<comment type="similarity">
    <text evidence="3 4">Belongs to the cytochrome b family.</text>
</comment>
<comment type="caution">
    <text evidence="2">The full-length protein contains only eight transmembrane helices, not nine as predicted by bioinformatics tools.</text>
</comment>